<reference key="1">
    <citation type="submission" date="2007-03" db="EMBL/GenBank/DDBJ databases">
        <title>Sequencing analysis of Capsella bursa-pastoris JO22 chloroplast DNA.</title>
        <authorList>
            <person name="Hosouchi T."/>
            <person name="Tsuruoka H."/>
            <person name="Kotani H."/>
        </authorList>
    </citation>
    <scope>NUCLEOTIDE SEQUENCE [LARGE SCALE GENOMIC DNA]</scope>
</reference>
<evidence type="ECO:0000250" key="1">
    <source>
        <dbReference type="UniProtKB" id="P56778"/>
    </source>
</evidence>
<evidence type="ECO:0000255" key="2">
    <source>
        <dbReference type="HAMAP-Rule" id="MF_01496"/>
    </source>
</evidence>
<gene>
    <name evidence="2" type="primary">psbC</name>
</gene>
<keyword id="KW-0007">Acetylation</keyword>
<keyword id="KW-0148">Chlorophyll</keyword>
<keyword id="KW-0150">Chloroplast</keyword>
<keyword id="KW-0157">Chromophore</keyword>
<keyword id="KW-0464">Manganese</keyword>
<keyword id="KW-0472">Membrane</keyword>
<keyword id="KW-0479">Metal-binding</keyword>
<keyword id="KW-0597">Phosphoprotein</keyword>
<keyword id="KW-0602">Photosynthesis</keyword>
<keyword id="KW-0604">Photosystem II</keyword>
<keyword id="KW-0934">Plastid</keyword>
<keyword id="KW-0793">Thylakoid</keyword>
<keyword id="KW-0812">Transmembrane</keyword>
<keyword id="KW-1133">Transmembrane helix</keyword>
<comment type="function">
    <text evidence="2">One of the components of the core complex of photosystem II (PSII). It binds chlorophyll and helps catalyze the primary light-induced photochemical processes of PSII. PSII is a light-driven water:plastoquinone oxidoreductase, using light energy to abstract electrons from H(2)O, generating O(2) and a proton gradient subsequently used for ATP formation.</text>
</comment>
<comment type="cofactor">
    <text evidence="2">Binds multiple chlorophylls and provides some of the ligands for the Ca-4Mn-5O cluster of the oxygen-evolving complex. It may also provide a ligand for a Cl- that is required for oxygen evolution. PSII binds additional chlorophylls, carotenoids and specific lipids.</text>
</comment>
<comment type="subunit">
    <text evidence="2">PSII is composed of 1 copy each of membrane proteins PsbA, PsbB, PsbC, PsbD, PsbE, PsbF, PsbH, PsbI, PsbJ, PsbK, PsbL, PsbM, PsbT, PsbX, PsbY, PsbZ, Psb30/Ycf12, at least 3 peripheral proteins of the oxygen-evolving complex and a large number of cofactors. It forms dimeric complexes.</text>
</comment>
<comment type="subcellular location">
    <subcellularLocation>
        <location evidence="2">Plastid</location>
        <location evidence="2">Chloroplast thylakoid membrane</location>
        <topology evidence="2">Multi-pass membrane protein</topology>
    </subcellularLocation>
</comment>
<comment type="similarity">
    <text evidence="2">Belongs to the PsbB/PsbC family. PsbC subfamily.</text>
</comment>
<geneLocation type="chloroplast"/>
<proteinExistence type="inferred from homology"/>
<accession>A4QKI8</accession>
<sequence length="473" mass="51854">MKTLYSLRRFYHVETLFNGTLALAGRDQETTGFAWWAGNARLINLSGKLLGAHVAHAGLIVFWAGAMNLFEVAHFVPEKPMYEQGLILLPHLATLGWGVGPGGEVIDTFPYFVSGVLHVISSAVLGFGGIYHALLGPETLEESFPFFGYVWKDRNKMTTILGIHLILLGVGAFLLVFKALYFGGVYDTWAPGGGDVRKITNLTLSPSVIFGYLLKSPFGGEGWIVSVDDLEDIIGGHVWLGSICIFGGIWHILTKPFAWARRALVWSGEAYLSYSLAALSVCGFIACCFVWFNNTAYPSEFYGPTGPEASQAQAFTFLVRDQRLGANVGSAQGPTGLGKYLMRSPTGEVIFGGETMRFWDLRAPWLEPLRGPNGLDLSRLKKDIQPWQERRSAEYMTHAPLGSLNSVGGVATEINAVNYVSPRSWLSTSHFVLGFFLFVGHLWHAGRARAAAAGFEKGIDRDFEPVLSMTPLN</sequence>
<dbReference type="EMBL" id="AP009371">
    <property type="protein sequence ID" value="BAF50193.1"/>
    <property type="molecule type" value="Genomic_DNA"/>
</dbReference>
<dbReference type="RefSeq" id="YP_001123369.2">
    <property type="nucleotide sequence ID" value="NC_009270.1"/>
</dbReference>
<dbReference type="SMR" id="A4QKI8"/>
<dbReference type="GeneID" id="4961674"/>
<dbReference type="GO" id="GO:0009535">
    <property type="term" value="C:chloroplast thylakoid membrane"/>
    <property type="evidence" value="ECO:0007669"/>
    <property type="project" value="UniProtKB-SubCell"/>
</dbReference>
<dbReference type="GO" id="GO:0009523">
    <property type="term" value="C:photosystem II"/>
    <property type="evidence" value="ECO:0007669"/>
    <property type="project" value="UniProtKB-KW"/>
</dbReference>
<dbReference type="GO" id="GO:0016168">
    <property type="term" value="F:chlorophyll binding"/>
    <property type="evidence" value="ECO:0007669"/>
    <property type="project" value="UniProtKB-UniRule"/>
</dbReference>
<dbReference type="GO" id="GO:0045156">
    <property type="term" value="F:electron transporter, transferring electrons within the cyclic electron transport pathway of photosynthesis activity"/>
    <property type="evidence" value="ECO:0007669"/>
    <property type="project" value="InterPro"/>
</dbReference>
<dbReference type="GO" id="GO:0046872">
    <property type="term" value="F:metal ion binding"/>
    <property type="evidence" value="ECO:0007669"/>
    <property type="project" value="UniProtKB-KW"/>
</dbReference>
<dbReference type="GO" id="GO:0009772">
    <property type="term" value="P:photosynthetic electron transport in photosystem II"/>
    <property type="evidence" value="ECO:0007669"/>
    <property type="project" value="InterPro"/>
</dbReference>
<dbReference type="FunFam" id="1.10.10.670:FF:000001">
    <property type="entry name" value="Photosystem II CP43 reaction center protein"/>
    <property type="match status" value="1"/>
</dbReference>
<dbReference type="Gene3D" id="1.10.10.670">
    <property type="entry name" value="photosystem ii from thermosynechococcus elongatus"/>
    <property type="match status" value="1"/>
</dbReference>
<dbReference type="HAMAP" id="MF_01496">
    <property type="entry name" value="PSII_PsbC_CP43"/>
    <property type="match status" value="1"/>
</dbReference>
<dbReference type="InterPro" id="IPR000932">
    <property type="entry name" value="PS_antenna-like"/>
</dbReference>
<dbReference type="InterPro" id="IPR036001">
    <property type="entry name" value="PS_II_antenna-like_sf"/>
</dbReference>
<dbReference type="InterPro" id="IPR005869">
    <property type="entry name" value="PSII_PsbC"/>
</dbReference>
<dbReference type="InterPro" id="IPR044900">
    <property type="entry name" value="PSII_PsbC_sf"/>
</dbReference>
<dbReference type="NCBIfam" id="TIGR01153">
    <property type="entry name" value="psbC"/>
    <property type="match status" value="1"/>
</dbReference>
<dbReference type="Pfam" id="PF00421">
    <property type="entry name" value="PSII"/>
    <property type="match status" value="1"/>
</dbReference>
<dbReference type="SUPFAM" id="SSF161077">
    <property type="entry name" value="Photosystem II antenna protein-like"/>
    <property type="match status" value="1"/>
</dbReference>
<name>PSBC_CAPBU</name>
<feature type="propeptide" id="PRO_0000431118" evidence="2">
    <location>
        <begin position="1"/>
        <end position="14"/>
    </location>
</feature>
<feature type="chain" id="PRO_0000361333" description="Photosystem II CP43 reaction center protein" evidence="2">
    <location>
        <begin position="15"/>
        <end position="473"/>
    </location>
</feature>
<feature type="transmembrane region" description="Helical" evidence="2">
    <location>
        <begin position="69"/>
        <end position="93"/>
    </location>
</feature>
<feature type="transmembrane region" description="Helical" evidence="2">
    <location>
        <begin position="134"/>
        <end position="155"/>
    </location>
</feature>
<feature type="transmembrane region" description="Helical" evidence="2">
    <location>
        <begin position="178"/>
        <end position="200"/>
    </location>
</feature>
<feature type="transmembrane region" description="Helical" evidence="2">
    <location>
        <begin position="255"/>
        <end position="275"/>
    </location>
</feature>
<feature type="transmembrane region" description="Helical" evidence="2">
    <location>
        <begin position="291"/>
        <end position="312"/>
    </location>
</feature>
<feature type="transmembrane region" description="Helical" evidence="2">
    <location>
        <begin position="447"/>
        <end position="471"/>
    </location>
</feature>
<feature type="binding site" evidence="2">
    <location>
        <position position="367"/>
    </location>
    <ligand>
        <name>[CaMn4O5] cluster</name>
        <dbReference type="ChEBI" id="CHEBI:189552"/>
    </ligand>
</feature>
<feature type="modified residue" description="N-acetylthreonine" evidence="1 2">
    <location>
        <position position="15"/>
    </location>
</feature>
<feature type="modified residue" description="Phosphothreonine" evidence="1 2">
    <location>
        <position position="15"/>
    </location>
</feature>
<protein>
    <recommendedName>
        <fullName evidence="2">Photosystem II CP43 reaction center protein</fullName>
    </recommendedName>
    <alternativeName>
        <fullName evidence="2">PSII 43 kDa protein</fullName>
    </alternativeName>
    <alternativeName>
        <fullName evidence="2">Protein CP-43</fullName>
    </alternativeName>
</protein>
<organism>
    <name type="scientific">Capsella bursa-pastoris</name>
    <name type="common">Shepherd's purse</name>
    <name type="synonym">Thlaspi bursa-pastoris</name>
    <dbReference type="NCBI Taxonomy" id="3719"/>
    <lineage>
        <taxon>Eukaryota</taxon>
        <taxon>Viridiplantae</taxon>
        <taxon>Streptophyta</taxon>
        <taxon>Embryophyta</taxon>
        <taxon>Tracheophyta</taxon>
        <taxon>Spermatophyta</taxon>
        <taxon>Magnoliopsida</taxon>
        <taxon>eudicotyledons</taxon>
        <taxon>Gunneridae</taxon>
        <taxon>Pentapetalae</taxon>
        <taxon>rosids</taxon>
        <taxon>malvids</taxon>
        <taxon>Brassicales</taxon>
        <taxon>Brassicaceae</taxon>
        <taxon>Camelineae</taxon>
        <taxon>Capsella</taxon>
    </lineage>
</organism>